<accession>Q67KI8</accession>
<gene>
    <name evidence="1" type="primary">ligA</name>
    <name type="ordered locus">STH2825</name>
</gene>
<reference key="1">
    <citation type="journal article" date="2004" name="Nucleic Acids Res.">
        <title>Genome sequence of Symbiobacterium thermophilum, an uncultivable bacterium that depends on microbial commensalism.</title>
        <authorList>
            <person name="Ueda K."/>
            <person name="Yamashita A."/>
            <person name="Ishikawa J."/>
            <person name="Shimada M."/>
            <person name="Watsuji T."/>
            <person name="Morimura K."/>
            <person name="Ikeda H."/>
            <person name="Hattori M."/>
            <person name="Beppu T."/>
        </authorList>
    </citation>
    <scope>NUCLEOTIDE SEQUENCE [LARGE SCALE GENOMIC DNA]</scope>
    <source>
        <strain>DSM 24528 / JCM 14929 / IAM 14863 / T</strain>
    </source>
</reference>
<sequence>MDRSWAERRIPELIETIRHHEYLYYVKNEPEISDAAFDELMQELKQLEEAFPDLRRPDSPTQRVGGATAPDFAKVPHQPPMYSLDNAFSEADLRDFDRRVREGLGGEPVSYVCELKIDGLSISLRYEDGLFVQGATRGDGETGEDVTENLRTIGSIPLRLDGTEAPVPPRLIVRGEVYMTKQVLEELNAALAAEGKPLLQNPRNAAAGGLRQKDPRKTRERRLDAFLYQVVDAEALGIADHWSALQRLQAWRFKVNPHRHLAHTIDEVLDWVAGWQARRHELPYEIDGLVIKVNDLAQQRRLGFTSKFPRWAIAYKFPAEERETTVVGISLEVGRTGVVTPSADLAPVRIAGTTVKRATLHNEDYIREKDIRVGDTVIVRKAGEIIPEVVRVVPEKRPPDAQPWTFPKTCPACGAELVRIEGEAATRCTNNLCPAQQYRAILHFASRDAMNIEGLGEALVQSLLDHGLIEDAADLYRLHEKRDALIRLERMGEKSVDNLLAAIDATRQNPLHRLIFALGIRHVGERAARLLADHFGSMEAIEQAGLDELTAIPGLGPKIAESVKNYFASPRSHQLLAKLRAAGVNMVGEKKAGPAEGPLAGMTVVVTGTLVRWSRKEIEELIQQLGGKAAGSVSRKTSFVVAGEAAGSKLQKAQELGIPVLTEDEFCERYLQG</sequence>
<organism>
    <name type="scientific">Symbiobacterium thermophilum (strain DSM 24528 / JCM 14929 / IAM 14863 / T)</name>
    <dbReference type="NCBI Taxonomy" id="292459"/>
    <lineage>
        <taxon>Bacteria</taxon>
        <taxon>Bacillati</taxon>
        <taxon>Bacillota</taxon>
        <taxon>Clostridia</taxon>
        <taxon>Eubacteriales</taxon>
        <taxon>Symbiobacteriaceae</taxon>
        <taxon>Symbiobacterium</taxon>
    </lineage>
</organism>
<dbReference type="EC" id="6.5.1.2" evidence="1"/>
<dbReference type="EMBL" id="AP006840">
    <property type="protein sequence ID" value="BAD41810.1"/>
    <property type="molecule type" value="Genomic_DNA"/>
</dbReference>
<dbReference type="RefSeq" id="WP_011196944.1">
    <property type="nucleotide sequence ID" value="NC_006177.1"/>
</dbReference>
<dbReference type="SMR" id="Q67KI8"/>
<dbReference type="STRING" id="292459.STH2825"/>
<dbReference type="KEGG" id="sth:STH2825"/>
<dbReference type="eggNOG" id="COG0272">
    <property type="taxonomic scope" value="Bacteria"/>
</dbReference>
<dbReference type="HOGENOM" id="CLU_007764_2_1_9"/>
<dbReference type="OrthoDB" id="9759736at2"/>
<dbReference type="Proteomes" id="UP000000417">
    <property type="component" value="Chromosome"/>
</dbReference>
<dbReference type="GO" id="GO:0005829">
    <property type="term" value="C:cytosol"/>
    <property type="evidence" value="ECO:0007669"/>
    <property type="project" value="TreeGrafter"/>
</dbReference>
<dbReference type="GO" id="GO:0003677">
    <property type="term" value="F:DNA binding"/>
    <property type="evidence" value="ECO:0007669"/>
    <property type="project" value="InterPro"/>
</dbReference>
<dbReference type="GO" id="GO:0003911">
    <property type="term" value="F:DNA ligase (NAD+) activity"/>
    <property type="evidence" value="ECO:0007669"/>
    <property type="project" value="UniProtKB-UniRule"/>
</dbReference>
<dbReference type="GO" id="GO:0046872">
    <property type="term" value="F:metal ion binding"/>
    <property type="evidence" value="ECO:0007669"/>
    <property type="project" value="UniProtKB-KW"/>
</dbReference>
<dbReference type="GO" id="GO:0006281">
    <property type="term" value="P:DNA repair"/>
    <property type="evidence" value="ECO:0007669"/>
    <property type="project" value="UniProtKB-KW"/>
</dbReference>
<dbReference type="GO" id="GO:0006260">
    <property type="term" value="P:DNA replication"/>
    <property type="evidence" value="ECO:0007669"/>
    <property type="project" value="UniProtKB-KW"/>
</dbReference>
<dbReference type="CDD" id="cd17748">
    <property type="entry name" value="BRCT_DNA_ligase_like"/>
    <property type="match status" value="1"/>
</dbReference>
<dbReference type="CDD" id="cd00114">
    <property type="entry name" value="LIGANc"/>
    <property type="match status" value="1"/>
</dbReference>
<dbReference type="FunFam" id="1.10.150.20:FF:000006">
    <property type="entry name" value="DNA ligase"/>
    <property type="match status" value="1"/>
</dbReference>
<dbReference type="FunFam" id="1.10.150.20:FF:000007">
    <property type="entry name" value="DNA ligase"/>
    <property type="match status" value="1"/>
</dbReference>
<dbReference type="FunFam" id="1.10.287.610:FF:000002">
    <property type="entry name" value="DNA ligase"/>
    <property type="match status" value="1"/>
</dbReference>
<dbReference type="FunFam" id="2.40.50.140:FF:000012">
    <property type="entry name" value="DNA ligase"/>
    <property type="match status" value="1"/>
</dbReference>
<dbReference type="FunFam" id="3.30.470.30:FF:000001">
    <property type="entry name" value="DNA ligase"/>
    <property type="match status" value="1"/>
</dbReference>
<dbReference type="Gene3D" id="6.20.10.30">
    <property type="match status" value="1"/>
</dbReference>
<dbReference type="Gene3D" id="1.10.150.20">
    <property type="entry name" value="5' to 3' exonuclease, C-terminal subdomain"/>
    <property type="match status" value="2"/>
</dbReference>
<dbReference type="Gene3D" id="3.40.50.10190">
    <property type="entry name" value="BRCT domain"/>
    <property type="match status" value="1"/>
</dbReference>
<dbReference type="Gene3D" id="3.30.470.30">
    <property type="entry name" value="DNA ligase/mRNA capping enzyme"/>
    <property type="match status" value="1"/>
</dbReference>
<dbReference type="Gene3D" id="1.10.287.610">
    <property type="entry name" value="Helix hairpin bin"/>
    <property type="match status" value="1"/>
</dbReference>
<dbReference type="Gene3D" id="2.40.50.140">
    <property type="entry name" value="Nucleic acid-binding proteins"/>
    <property type="match status" value="1"/>
</dbReference>
<dbReference type="HAMAP" id="MF_01588">
    <property type="entry name" value="DNA_ligase_A"/>
    <property type="match status" value="1"/>
</dbReference>
<dbReference type="InterPro" id="IPR001357">
    <property type="entry name" value="BRCT_dom"/>
</dbReference>
<dbReference type="InterPro" id="IPR036420">
    <property type="entry name" value="BRCT_dom_sf"/>
</dbReference>
<dbReference type="InterPro" id="IPR041663">
    <property type="entry name" value="DisA/LigA_HHH"/>
</dbReference>
<dbReference type="InterPro" id="IPR001679">
    <property type="entry name" value="DNA_ligase"/>
</dbReference>
<dbReference type="InterPro" id="IPR018239">
    <property type="entry name" value="DNA_ligase_AS"/>
</dbReference>
<dbReference type="InterPro" id="IPR013839">
    <property type="entry name" value="DNAligase_adenylation"/>
</dbReference>
<dbReference type="InterPro" id="IPR013840">
    <property type="entry name" value="DNAligase_N"/>
</dbReference>
<dbReference type="InterPro" id="IPR003583">
    <property type="entry name" value="Hlx-hairpin-Hlx_DNA-bd_motif"/>
</dbReference>
<dbReference type="InterPro" id="IPR012340">
    <property type="entry name" value="NA-bd_OB-fold"/>
</dbReference>
<dbReference type="InterPro" id="IPR004150">
    <property type="entry name" value="NAD_DNA_ligase_OB"/>
</dbReference>
<dbReference type="InterPro" id="IPR010994">
    <property type="entry name" value="RuvA_2-like"/>
</dbReference>
<dbReference type="InterPro" id="IPR004149">
    <property type="entry name" value="Znf_DNAligase_C4"/>
</dbReference>
<dbReference type="NCBIfam" id="TIGR00575">
    <property type="entry name" value="dnlj"/>
    <property type="match status" value="1"/>
</dbReference>
<dbReference type="NCBIfam" id="NF005932">
    <property type="entry name" value="PRK07956.1"/>
    <property type="match status" value="1"/>
</dbReference>
<dbReference type="PANTHER" id="PTHR23389">
    <property type="entry name" value="CHROMOSOME TRANSMISSION FIDELITY FACTOR 18"/>
    <property type="match status" value="1"/>
</dbReference>
<dbReference type="PANTHER" id="PTHR23389:SF9">
    <property type="entry name" value="DNA LIGASE"/>
    <property type="match status" value="1"/>
</dbReference>
<dbReference type="Pfam" id="PF00533">
    <property type="entry name" value="BRCT"/>
    <property type="match status" value="1"/>
</dbReference>
<dbReference type="Pfam" id="PF01653">
    <property type="entry name" value="DNA_ligase_aden"/>
    <property type="match status" value="1"/>
</dbReference>
<dbReference type="Pfam" id="PF03120">
    <property type="entry name" value="DNA_ligase_OB"/>
    <property type="match status" value="1"/>
</dbReference>
<dbReference type="Pfam" id="PF03119">
    <property type="entry name" value="DNA_ligase_ZBD"/>
    <property type="match status" value="1"/>
</dbReference>
<dbReference type="Pfam" id="PF12826">
    <property type="entry name" value="HHH_2"/>
    <property type="match status" value="1"/>
</dbReference>
<dbReference type="Pfam" id="PF14520">
    <property type="entry name" value="HHH_5"/>
    <property type="match status" value="1"/>
</dbReference>
<dbReference type="Pfam" id="PF22745">
    <property type="entry name" value="Nlig-Ia"/>
    <property type="match status" value="1"/>
</dbReference>
<dbReference type="PIRSF" id="PIRSF001604">
    <property type="entry name" value="LigA"/>
    <property type="match status" value="1"/>
</dbReference>
<dbReference type="SMART" id="SM00292">
    <property type="entry name" value="BRCT"/>
    <property type="match status" value="1"/>
</dbReference>
<dbReference type="SMART" id="SM00278">
    <property type="entry name" value="HhH1"/>
    <property type="match status" value="4"/>
</dbReference>
<dbReference type="SMART" id="SM00532">
    <property type="entry name" value="LIGANc"/>
    <property type="match status" value="1"/>
</dbReference>
<dbReference type="SUPFAM" id="SSF52113">
    <property type="entry name" value="BRCT domain"/>
    <property type="match status" value="1"/>
</dbReference>
<dbReference type="SUPFAM" id="SSF56091">
    <property type="entry name" value="DNA ligase/mRNA capping enzyme, catalytic domain"/>
    <property type="match status" value="1"/>
</dbReference>
<dbReference type="SUPFAM" id="SSF50249">
    <property type="entry name" value="Nucleic acid-binding proteins"/>
    <property type="match status" value="1"/>
</dbReference>
<dbReference type="SUPFAM" id="SSF47781">
    <property type="entry name" value="RuvA domain 2-like"/>
    <property type="match status" value="1"/>
</dbReference>
<dbReference type="PROSITE" id="PS50172">
    <property type="entry name" value="BRCT"/>
    <property type="match status" value="1"/>
</dbReference>
<dbReference type="PROSITE" id="PS01055">
    <property type="entry name" value="DNA_LIGASE_N1"/>
    <property type="match status" value="1"/>
</dbReference>
<keyword id="KW-0227">DNA damage</keyword>
<keyword id="KW-0234">DNA repair</keyword>
<keyword id="KW-0235">DNA replication</keyword>
<keyword id="KW-0436">Ligase</keyword>
<keyword id="KW-0460">Magnesium</keyword>
<keyword id="KW-0464">Manganese</keyword>
<keyword id="KW-0479">Metal-binding</keyword>
<keyword id="KW-0520">NAD</keyword>
<keyword id="KW-1185">Reference proteome</keyword>
<keyword id="KW-0862">Zinc</keyword>
<proteinExistence type="inferred from homology"/>
<evidence type="ECO:0000255" key="1">
    <source>
        <dbReference type="HAMAP-Rule" id="MF_01588"/>
    </source>
</evidence>
<evidence type="ECO:0000256" key="2">
    <source>
        <dbReference type="SAM" id="MobiDB-lite"/>
    </source>
</evidence>
<feature type="chain" id="PRO_0000313476" description="DNA ligase">
    <location>
        <begin position="1"/>
        <end position="673"/>
    </location>
</feature>
<feature type="domain" description="BRCT" evidence="1">
    <location>
        <begin position="594"/>
        <end position="673"/>
    </location>
</feature>
<feature type="region of interest" description="Disordered" evidence="2">
    <location>
        <begin position="54"/>
        <end position="73"/>
    </location>
</feature>
<feature type="active site" description="N6-AMP-lysine intermediate" evidence="1">
    <location>
        <position position="116"/>
    </location>
</feature>
<feature type="binding site" evidence="1">
    <location>
        <begin position="34"/>
        <end position="38"/>
    </location>
    <ligand>
        <name>NAD(+)</name>
        <dbReference type="ChEBI" id="CHEBI:57540"/>
    </ligand>
</feature>
<feature type="binding site" evidence="1">
    <location>
        <begin position="83"/>
        <end position="84"/>
    </location>
    <ligand>
        <name>NAD(+)</name>
        <dbReference type="ChEBI" id="CHEBI:57540"/>
    </ligand>
</feature>
<feature type="binding site" evidence="1">
    <location>
        <position position="114"/>
    </location>
    <ligand>
        <name>NAD(+)</name>
        <dbReference type="ChEBI" id="CHEBI:57540"/>
    </ligand>
</feature>
<feature type="binding site" evidence="1">
    <location>
        <position position="137"/>
    </location>
    <ligand>
        <name>NAD(+)</name>
        <dbReference type="ChEBI" id="CHEBI:57540"/>
    </ligand>
</feature>
<feature type="binding site" evidence="1">
    <location>
        <position position="176"/>
    </location>
    <ligand>
        <name>NAD(+)</name>
        <dbReference type="ChEBI" id="CHEBI:57540"/>
    </ligand>
</feature>
<feature type="binding site" evidence="1">
    <location>
        <position position="292"/>
    </location>
    <ligand>
        <name>NAD(+)</name>
        <dbReference type="ChEBI" id="CHEBI:57540"/>
    </ligand>
</feature>
<feature type="binding site" evidence="1">
    <location>
        <position position="316"/>
    </location>
    <ligand>
        <name>NAD(+)</name>
        <dbReference type="ChEBI" id="CHEBI:57540"/>
    </ligand>
</feature>
<feature type="binding site" evidence="1">
    <location>
        <position position="410"/>
    </location>
    <ligand>
        <name>Zn(2+)</name>
        <dbReference type="ChEBI" id="CHEBI:29105"/>
    </ligand>
</feature>
<feature type="binding site" evidence="1">
    <location>
        <position position="413"/>
    </location>
    <ligand>
        <name>Zn(2+)</name>
        <dbReference type="ChEBI" id="CHEBI:29105"/>
    </ligand>
</feature>
<feature type="binding site" evidence="1">
    <location>
        <position position="428"/>
    </location>
    <ligand>
        <name>Zn(2+)</name>
        <dbReference type="ChEBI" id="CHEBI:29105"/>
    </ligand>
</feature>
<feature type="binding site" evidence="1">
    <location>
        <position position="433"/>
    </location>
    <ligand>
        <name>Zn(2+)</name>
        <dbReference type="ChEBI" id="CHEBI:29105"/>
    </ligand>
</feature>
<protein>
    <recommendedName>
        <fullName evidence="1">DNA ligase</fullName>
        <ecNumber evidence="1">6.5.1.2</ecNumber>
    </recommendedName>
    <alternativeName>
        <fullName evidence="1">Polydeoxyribonucleotide synthase [NAD(+)]</fullName>
    </alternativeName>
</protein>
<comment type="function">
    <text evidence="1">DNA ligase that catalyzes the formation of phosphodiester linkages between 5'-phosphoryl and 3'-hydroxyl groups in double-stranded DNA using NAD as a coenzyme and as the energy source for the reaction. It is essential for DNA replication and repair of damaged DNA.</text>
</comment>
<comment type="catalytic activity">
    <reaction evidence="1">
        <text>NAD(+) + (deoxyribonucleotide)n-3'-hydroxyl + 5'-phospho-(deoxyribonucleotide)m = (deoxyribonucleotide)n+m + AMP + beta-nicotinamide D-nucleotide.</text>
        <dbReference type="EC" id="6.5.1.2"/>
    </reaction>
</comment>
<comment type="cofactor">
    <cofactor evidence="1">
        <name>Mg(2+)</name>
        <dbReference type="ChEBI" id="CHEBI:18420"/>
    </cofactor>
    <cofactor evidence="1">
        <name>Mn(2+)</name>
        <dbReference type="ChEBI" id="CHEBI:29035"/>
    </cofactor>
</comment>
<comment type="similarity">
    <text evidence="1">Belongs to the NAD-dependent DNA ligase family. LigA subfamily.</text>
</comment>
<name>DNLJ_SYMTH</name>